<protein>
    <recommendedName>
        <fullName evidence="1">Urease accessory protein UreF</fullName>
    </recommendedName>
</protein>
<name>UREF_STAAT</name>
<proteinExistence type="inferred from homology"/>
<accession>A8Z389</accession>
<evidence type="ECO:0000255" key="1">
    <source>
        <dbReference type="HAMAP-Rule" id="MF_01385"/>
    </source>
</evidence>
<dbReference type="EMBL" id="CP000730">
    <property type="protein sequence ID" value="ABX30266.1"/>
    <property type="molecule type" value="Genomic_DNA"/>
</dbReference>
<dbReference type="RefSeq" id="WP_000565255.1">
    <property type="nucleotide sequence ID" value="NC_010079.1"/>
</dbReference>
<dbReference type="SMR" id="A8Z389"/>
<dbReference type="KEGG" id="sax:USA300HOU_2273"/>
<dbReference type="HOGENOM" id="CLU_049215_4_2_9"/>
<dbReference type="GO" id="GO:0005737">
    <property type="term" value="C:cytoplasm"/>
    <property type="evidence" value="ECO:0007669"/>
    <property type="project" value="UniProtKB-SubCell"/>
</dbReference>
<dbReference type="GO" id="GO:0016151">
    <property type="term" value="F:nickel cation binding"/>
    <property type="evidence" value="ECO:0007669"/>
    <property type="project" value="UniProtKB-UniRule"/>
</dbReference>
<dbReference type="Gene3D" id="1.10.4190.10">
    <property type="entry name" value="Urease accessory protein UreF"/>
    <property type="match status" value="1"/>
</dbReference>
<dbReference type="HAMAP" id="MF_01385">
    <property type="entry name" value="UreF"/>
    <property type="match status" value="1"/>
</dbReference>
<dbReference type="InterPro" id="IPR002639">
    <property type="entry name" value="UreF"/>
</dbReference>
<dbReference type="InterPro" id="IPR038277">
    <property type="entry name" value="UreF_sf"/>
</dbReference>
<dbReference type="PANTHER" id="PTHR33620">
    <property type="entry name" value="UREASE ACCESSORY PROTEIN F"/>
    <property type="match status" value="1"/>
</dbReference>
<dbReference type="PANTHER" id="PTHR33620:SF1">
    <property type="entry name" value="UREASE ACCESSORY PROTEIN F"/>
    <property type="match status" value="1"/>
</dbReference>
<dbReference type="Pfam" id="PF01730">
    <property type="entry name" value="UreF"/>
    <property type="match status" value="1"/>
</dbReference>
<dbReference type="PIRSF" id="PIRSF009467">
    <property type="entry name" value="Ureas_acces_UreF"/>
    <property type="match status" value="1"/>
</dbReference>
<organism>
    <name type="scientific">Staphylococcus aureus (strain USA300 / TCH1516)</name>
    <dbReference type="NCBI Taxonomy" id="451516"/>
    <lineage>
        <taxon>Bacteria</taxon>
        <taxon>Bacillati</taxon>
        <taxon>Bacillota</taxon>
        <taxon>Bacilli</taxon>
        <taxon>Bacillales</taxon>
        <taxon>Staphylococcaceae</taxon>
        <taxon>Staphylococcus</taxon>
    </lineage>
</organism>
<keyword id="KW-0143">Chaperone</keyword>
<keyword id="KW-0963">Cytoplasm</keyword>
<keyword id="KW-0996">Nickel insertion</keyword>
<feature type="chain" id="PRO_0000344191" description="Urease accessory protein UreF">
    <location>
        <begin position="1"/>
        <end position="229"/>
    </location>
</feature>
<gene>
    <name evidence="1" type="primary">ureF</name>
    <name type="ordered locus">USA300HOU_2273</name>
</gene>
<sequence>MIDHTHLRLFQFCDSQFPTGAFSHSFGLETYIQRNIIHDDHTFIAWLKMFLQEQLTYSDGLAMRLVYDALENDDTQKVLHIDKLMFVQNLPKETRVGAKQMGTRMVKLALELYNSPWIAWYHQQMQDKKAKLNPAICFTMLGHHLGVDIETIIDYYLYQNVSSLTQNAVRAIPLGQTAGQKIVTHMIPYIEGTRKQIFELKEADFGMTAPGLELNQMAHENVNVRIFIS</sequence>
<comment type="function">
    <text evidence="1">Required for maturation of urease via the functional incorporation of the urease nickel metallocenter.</text>
</comment>
<comment type="subunit">
    <text evidence="1">UreD, UreF and UreG form a complex that acts as a GTP-hydrolysis-dependent molecular chaperone, activating the urease apoprotein by helping to assemble the nickel containing metallocenter of UreC. The UreE protein probably delivers the nickel.</text>
</comment>
<comment type="subcellular location">
    <subcellularLocation>
        <location evidence="1">Cytoplasm</location>
    </subcellularLocation>
</comment>
<comment type="similarity">
    <text evidence="1">Belongs to the UreF family.</text>
</comment>
<reference key="1">
    <citation type="journal article" date="2007" name="BMC Microbiol.">
        <title>Subtle genetic changes enhance virulence of methicillin resistant and sensitive Staphylococcus aureus.</title>
        <authorList>
            <person name="Highlander S.K."/>
            <person name="Hulten K.G."/>
            <person name="Qin X."/>
            <person name="Jiang H."/>
            <person name="Yerrapragada S."/>
            <person name="Mason E.O. Jr."/>
            <person name="Shang Y."/>
            <person name="Williams T.M."/>
            <person name="Fortunov R.M."/>
            <person name="Liu Y."/>
            <person name="Igboeli O."/>
            <person name="Petrosino J."/>
            <person name="Tirumalai M."/>
            <person name="Uzman A."/>
            <person name="Fox G.E."/>
            <person name="Cardenas A.M."/>
            <person name="Muzny D.M."/>
            <person name="Hemphill L."/>
            <person name="Ding Y."/>
            <person name="Dugan S."/>
            <person name="Blyth P.R."/>
            <person name="Buhay C.J."/>
            <person name="Dinh H.H."/>
            <person name="Hawes A.C."/>
            <person name="Holder M."/>
            <person name="Kovar C.L."/>
            <person name="Lee S.L."/>
            <person name="Liu W."/>
            <person name="Nazareth L.V."/>
            <person name="Wang Q."/>
            <person name="Zhou J."/>
            <person name="Kaplan S.L."/>
            <person name="Weinstock G.M."/>
        </authorList>
    </citation>
    <scope>NUCLEOTIDE SEQUENCE [LARGE SCALE GENOMIC DNA]</scope>
    <source>
        <strain>USA300 / TCH1516</strain>
    </source>
</reference>